<feature type="signal peptide" evidence="2">
    <location>
        <begin position="1"/>
        <end position="23"/>
    </location>
</feature>
<feature type="chain" id="PRO_0000367339" description="GDSL esterase/lipase 6">
    <location>
        <begin position="24"/>
        <end position="362"/>
    </location>
</feature>
<feature type="active site" description="Nucleophile" evidence="1">
    <location>
        <position position="38"/>
    </location>
</feature>
<feature type="active site" evidence="1">
    <location>
        <position position="323"/>
    </location>
</feature>
<feature type="active site" evidence="1">
    <location>
        <position position="326"/>
    </location>
</feature>
<feature type="glycosylation site" description="N-linked (GlcNAc...) asparagine" evidence="2">
    <location>
        <position position="50"/>
    </location>
</feature>
<feature type="glycosylation site" description="N-linked (GlcNAc...) asparagine" evidence="2">
    <location>
        <position position="103"/>
    </location>
</feature>
<feature type="glycosylation site" description="N-linked (GlcNAc...) asparagine" evidence="2">
    <location>
        <position position="107"/>
    </location>
</feature>
<feature type="glycosylation site" description="N-linked (GlcNAc...) asparagine" evidence="2">
    <location>
        <position position="195"/>
    </location>
</feature>
<feature type="glycosylation site" description="N-linked (GlcNAc...) asparagine" evidence="2">
    <location>
        <position position="296"/>
    </location>
</feature>
<protein>
    <recommendedName>
        <fullName>GDSL esterase/lipase 6</fullName>
        <ecNumber>3.1.1.-</ecNumber>
    </recommendedName>
    <alternativeName>
        <fullName>Extracellular lipase 6</fullName>
    </alternativeName>
</protein>
<name>GLIP6_ARATH</name>
<comment type="subcellular location">
    <subcellularLocation>
        <location evidence="1">Secreted</location>
    </subcellularLocation>
</comment>
<comment type="similarity">
    <text evidence="3">Belongs to the 'GDSL' lipolytic enzyme family.</text>
</comment>
<evidence type="ECO:0000250" key="1"/>
<evidence type="ECO:0000255" key="2"/>
<evidence type="ECO:0000305" key="3"/>
<sequence>MSSSSSMDLLMCLLLLISPVVLAKSSSTVPAIFTFGDSIFDAGNNHYNKNCTAQADFPPYGSSFFHRPTGRFTNGRTVADFISEFVGLPLQKPFLELQIQILNGTSNFSNGINFASAGSGLLLDTNKFMGVTPIQTQLQQFQTLVEQNLIEKSIIQESLFLLETGSNDIFNYFLPFRAPTLSPDAYVNAMLDQVNKTIDQIYKLGARRIAFFSLGPVGCVPARAMLPNAPTNKCFGKMNVMAKMYNKRLEDIVNIIPTKYPGAIAVFGAVYGITHRFQTYPARYGFSDVSNACCGNGTLGGLMQCGREGYKICNNPNEFLFWDFYHPTEHTYRLMSKALWNGNKNHIRPFNLMALATNKITF</sequence>
<gene>
    <name type="primary">GLIP6</name>
    <name type="ordered locus">At1g71120</name>
    <name type="ORF">F23N20.11</name>
</gene>
<keyword id="KW-0325">Glycoprotein</keyword>
<keyword id="KW-0378">Hydrolase</keyword>
<keyword id="KW-0442">Lipid degradation</keyword>
<keyword id="KW-0443">Lipid metabolism</keyword>
<keyword id="KW-1185">Reference proteome</keyword>
<keyword id="KW-0964">Secreted</keyword>
<keyword id="KW-0732">Signal</keyword>
<dbReference type="EC" id="3.1.1.-"/>
<dbReference type="EMBL" id="AC016972">
    <property type="protein sequence ID" value="AAG51687.1"/>
    <property type="molecule type" value="Genomic_DNA"/>
</dbReference>
<dbReference type="EMBL" id="CP002684">
    <property type="protein sequence ID" value="AEE35163.1"/>
    <property type="molecule type" value="Genomic_DNA"/>
</dbReference>
<dbReference type="PIR" id="G96735">
    <property type="entry name" value="G96735"/>
</dbReference>
<dbReference type="RefSeq" id="NP_177268.1">
    <property type="nucleotide sequence ID" value="NM_105781.2"/>
</dbReference>
<dbReference type="SMR" id="Q9C996"/>
<dbReference type="FunCoup" id="Q9C996">
    <property type="interactions" value="120"/>
</dbReference>
<dbReference type="STRING" id="3702.Q9C996"/>
<dbReference type="GlyCosmos" id="Q9C996">
    <property type="glycosylation" value="5 sites, No reported glycans"/>
</dbReference>
<dbReference type="GlyGen" id="Q9C996">
    <property type="glycosylation" value="5 sites"/>
</dbReference>
<dbReference type="PaxDb" id="3702-AT1G71120.1"/>
<dbReference type="ProteomicsDB" id="230489"/>
<dbReference type="EnsemblPlants" id="AT1G71120.1">
    <property type="protein sequence ID" value="AT1G71120.1"/>
    <property type="gene ID" value="AT1G71120"/>
</dbReference>
<dbReference type="GeneID" id="843452"/>
<dbReference type="Gramene" id="AT1G71120.1">
    <property type="protein sequence ID" value="AT1G71120.1"/>
    <property type="gene ID" value="AT1G71120"/>
</dbReference>
<dbReference type="KEGG" id="ath:AT1G71120"/>
<dbReference type="Araport" id="AT1G71120"/>
<dbReference type="TAIR" id="AT1G71120">
    <property type="gene designation" value="GLIP6"/>
</dbReference>
<dbReference type="eggNOG" id="ENOG502QQRE">
    <property type="taxonomic scope" value="Eukaryota"/>
</dbReference>
<dbReference type="HOGENOM" id="CLU_015101_0_2_1"/>
<dbReference type="InParanoid" id="Q9C996"/>
<dbReference type="OMA" id="NHYNKNC"/>
<dbReference type="PhylomeDB" id="Q9C996"/>
<dbReference type="BioCyc" id="ARA:AT1G71120-MONOMER"/>
<dbReference type="PRO" id="PR:Q9C996"/>
<dbReference type="Proteomes" id="UP000006548">
    <property type="component" value="Chromosome 1"/>
</dbReference>
<dbReference type="ExpressionAtlas" id="Q9C996">
    <property type="expression patterns" value="baseline and differential"/>
</dbReference>
<dbReference type="GO" id="GO:0005576">
    <property type="term" value="C:extracellular region"/>
    <property type="evidence" value="ECO:0007669"/>
    <property type="project" value="UniProtKB-SubCell"/>
</dbReference>
<dbReference type="GO" id="GO:0016298">
    <property type="term" value="F:lipase activity"/>
    <property type="evidence" value="ECO:0000250"/>
    <property type="project" value="TAIR"/>
</dbReference>
<dbReference type="GO" id="GO:0016042">
    <property type="term" value="P:lipid catabolic process"/>
    <property type="evidence" value="ECO:0007669"/>
    <property type="project" value="UniProtKB-KW"/>
</dbReference>
<dbReference type="CDD" id="cd01837">
    <property type="entry name" value="SGNH_plant_lipase_like"/>
    <property type="match status" value="1"/>
</dbReference>
<dbReference type="FunFam" id="3.40.50.1110:FF:000069">
    <property type="entry name" value="GDSL esterase/lipase 6"/>
    <property type="match status" value="1"/>
</dbReference>
<dbReference type="Gene3D" id="3.40.50.1110">
    <property type="entry name" value="SGNH hydrolase"/>
    <property type="match status" value="1"/>
</dbReference>
<dbReference type="InterPro" id="IPR001087">
    <property type="entry name" value="GDSL"/>
</dbReference>
<dbReference type="InterPro" id="IPR044552">
    <property type="entry name" value="GLIP1-5/GLL25"/>
</dbReference>
<dbReference type="InterPro" id="IPR036514">
    <property type="entry name" value="SGNH_hydro_sf"/>
</dbReference>
<dbReference type="InterPro" id="IPR035669">
    <property type="entry name" value="SGNH_plant_lipase-like"/>
</dbReference>
<dbReference type="PANTHER" id="PTHR45966:SF35">
    <property type="entry name" value="GDSL LIPASE_ESTERASE, SGNH HYDROLASE SUPERFAMILY"/>
    <property type="match status" value="1"/>
</dbReference>
<dbReference type="PANTHER" id="PTHR45966">
    <property type="entry name" value="GDSL-LIKE LIPASE/ACYLHYDROLASE"/>
    <property type="match status" value="1"/>
</dbReference>
<dbReference type="Pfam" id="PF00657">
    <property type="entry name" value="Lipase_GDSL"/>
    <property type="match status" value="1"/>
</dbReference>
<dbReference type="SUPFAM" id="SSF52266">
    <property type="entry name" value="SGNH hydrolase"/>
    <property type="match status" value="1"/>
</dbReference>
<accession>Q9C996</accession>
<reference key="1">
    <citation type="journal article" date="2000" name="Nature">
        <title>Sequence and analysis of chromosome 1 of the plant Arabidopsis thaliana.</title>
        <authorList>
            <person name="Theologis A."/>
            <person name="Ecker J.R."/>
            <person name="Palm C.J."/>
            <person name="Federspiel N.A."/>
            <person name="Kaul S."/>
            <person name="White O."/>
            <person name="Alonso J."/>
            <person name="Altafi H."/>
            <person name="Araujo R."/>
            <person name="Bowman C.L."/>
            <person name="Brooks S.Y."/>
            <person name="Buehler E."/>
            <person name="Chan A."/>
            <person name="Chao Q."/>
            <person name="Chen H."/>
            <person name="Cheuk R.F."/>
            <person name="Chin C.W."/>
            <person name="Chung M.K."/>
            <person name="Conn L."/>
            <person name="Conway A.B."/>
            <person name="Conway A.R."/>
            <person name="Creasy T.H."/>
            <person name="Dewar K."/>
            <person name="Dunn P."/>
            <person name="Etgu P."/>
            <person name="Feldblyum T.V."/>
            <person name="Feng J.-D."/>
            <person name="Fong B."/>
            <person name="Fujii C.Y."/>
            <person name="Gill J.E."/>
            <person name="Goldsmith A.D."/>
            <person name="Haas B."/>
            <person name="Hansen N.F."/>
            <person name="Hughes B."/>
            <person name="Huizar L."/>
            <person name="Hunter J.L."/>
            <person name="Jenkins J."/>
            <person name="Johnson-Hopson C."/>
            <person name="Khan S."/>
            <person name="Khaykin E."/>
            <person name="Kim C.J."/>
            <person name="Koo H.L."/>
            <person name="Kremenetskaia I."/>
            <person name="Kurtz D.B."/>
            <person name="Kwan A."/>
            <person name="Lam B."/>
            <person name="Langin-Hooper S."/>
            <person name="Lee A."/>
            <person name="Lee J.M."/>
            <person name="Lenz C.A."/>
            <person name="Li J.H."/>
            <person name="Li Y.-P."/>
            <person name="Lin X."/>
            <person name="Liu S.X."/>
            <person name="Liu Z.A."/>
            <person name="Luros J.S."/>
            <person name="Maiti R."/>
            <person name="Marziali A."/>
            <person name="Militscher J."/>
            <person name="Miranda M."/>
            <person name="Nguyen M."/>
            <person name="Nierman W.C."/>
            <person name="Osborne B.I."/>
            <person name="Pai G."/>
            <person name="Peterson J."/>
            <person name="Pham P.K."/>
            <person name="Rizzo M."/>
            <person name="Rooney T."/>
            <person name="Rowley D."/>
            <person name="Sakano H."/>
            <person name="Salzberg S.L."/>
            <person name="Schwartz J.R."/>
            <person name="Shinn P."/>
            <person name="Southwick A.M."/>
            <person name="Sun H."/>
            <person name="Tallon L.J."/>
            <person name="Tambunga G."/>
            <person name="Toriumi M.J."/>
            <person name="Town C.D."/>
            <person name="Utterback T."/>
            <person name="Van Aken S."/>
            <person name="Vaysberg M."/>
            <person name="Vysotskaia V.S."/>
            <person name="Walker M."/>
            <person name="Wu D."/>
            <person name="Yu G."/>
            <person name="Fraser C.M."/>
            <person name="Venter J.C."/>
            <person name="Davis R.W."/>
        </authorList>
    </citation>
    <scope>NUCLEOTIDE SEQUENCE [LARGE SCALE GENOMIC DNA]</scope>
    <source>
        <strain>cv. Columbia</strain>
    </source>
</reference>
<reference key="2">
    <citation type="journal article" date="2017" name="Plant J.">
        <title>Araport11: a complete reannotation of the Arabidopsis thaliana reference genome.</title>
        <authorList>
            <person name="Cheng C.Y."/>
            <person name="Krishnakumar V."/>
            <person name="Chan A.P."/>
            <person name="Thibaud-Nissen F."/>
            <person name="Schobel S."/>
            <person name="Town C.D."/>
        </authorList>
    </citation>
    <scope>GENOME REANNOTATION</scope>
    <source>
        <strain>cv. Columbia</strain>
    </source>
</reference>
<reference key="3">
    <citation type="journal article" date="2004" name="Prog. Lipid Res.">
        <title>GDSL family of serine esterases/lipases.</title>
        <authorList>
            <person name="Akoh C.C."/>
            <person name="Lee G.-C."/>
            <person name="Liaw Y.-C."/>
            <person name="Huang T.-H."/>
            <person name="Shaw J.-F."/>
        </authorList>
    </citation>
    <scope>REVIEW</scope>
</reference>
<reference key="4">
    <citation type="journal article" date="2005" name="Plant Cell">
        <title>Secretome analysis reveals an Arabidopsis lipase involved in defense against Alternaria brassicicola.</title>
        <authorList>
            <person name="Oh I.S."/>
            <person name="Park A.R."/>
            <person name="Bae M.S."/>
            <person name="Kwon S.J."/>
            <person name="Kim Y.S."/>
            <person name="Lee J.E."/>
            <person name="Kang N.Y."/>
            <person name="Lee S."/>
            <person name="Cheong H."/>
            <person name="Park O.K."/>
        </authorList>
    </citation>
    <scope>GENE FAMILY</scope>
</reference>
<reference key="5">
    <citation type="journal article" date="2008" name="Pak. J. Biol. Sci.">
        <title>Sequence analysis of GDSL lipase gene family in Arabidopsis thaliana.</title>
        <authorList>
            <person name="Ling H."/>
        </authorList>
    </citation>
    <scope>GENE FAMILY</scope>
</reference>
<proteinExistence type="evidence at transcript level"/>
<organism>
    <name type="scientific">Arabidopsis thaliana</name>
    <name type="common">Mouse-ear cress</name>
    <dbReference type="NCBI Taxonomy" id="3702"/>
    <lineage>
        <taxon>Eukaryota</taxon>
        <taxon>Viridiplantae</taxon>
        <taxon>Streptophyta</taxon>
        <taxon>Embryophyta</taxon>
        <taxon>Tracheophyta</taxon>
        <taxon>Spermatophyta</taxon>
        <taxon>Magnoliopsida</taxon>
        <taxon>eudicotyledons</taxon>
        <taxon>Gunneridae</taxon>
        <taxon>Pentapetalae</taxon>
        <taxon>rosids</taxon>
        <taxon>malvids</taxon>
        <taxon>Brassicales</taxon>
        <taxon>Brassicaceae</taxon>
        <taxon>Camelineae</taxon>
        <taxon>Arabidopsis</taxon>
    </lineage>
</organism>